<gene>
    <name evidence="4" type="primary">mtbB2</name>
</gene>
<accession>Q9P9N0</accession>
<organism>
    <name type="scientific">Methanosarcina barkeri</name>
    <dbReference type="NCBI Taxonomy" id="2208"/>
    <lineage>
        <taxon>Archaea</taxon>
        <taxon>Methanobacteriati</taxon>
        <taxon>Methanobacteriota</taxon>
        <taxon>Stenosarchaea group</taxon>
        <taxon>Methanomicrobia</taxon>
        <taxon>Methanosarcinales</taxon>
        <taxon>Methanosarcinaceae</taxon>
        <taxon>Methanosarcina</taxon>
    </lineage>
</organism>
<keyword id="KW-0484">Methanogenesis</keyword>
<keyword id="KW-0489">Methyltransferase</keyword>
<keyword id="KW-0669">Pyrrolysine</keyword>
<keyword id="KW-0808">Transferase</keyword>
<evidence type="ECO:0000250" key="1"/>
<evidence type="ECO:0000250" key="2">
    <source>
        <dbReference type="UniProtKB" id="O93661"/>
    </source>
</evidence>
<evidence type="ECO:0000269" key="3">
    <source>
    </source>
</evidence>
<evidence type="ECO:0000303" key="4">
    <source>
    </source>
</evidence>
<evidence type="ECO:0000305" key="5"/>
<evidence type="ECO:0000305" key="6">
    <source>
    </source>
</evidence>
<dbReference type="EC" id="2.1.1.249" evidence="2"/>
<dbReference type="EMBL" id="AF153453">
    <property type="protein sequence ID" value="AAD38790.2"/>
    <property type="molecule type" value="Genomic_DNA"/>
</dbReference>
<dbReference type="BRENDA" id="2.1.1.249">
    <property type="organism ID" value="3250"/>
</dbReference>
<dbReference type="UniPathway" id="UPA00644"/>
<dbReference type="GO" id="GO:0043791">
    <property type="term" value="F:dimethylamine methyltransferase activity"/>
    <property type="evidence" value="ECO:0000250"/>
    <property type="project" value="UniProtKB"/>
</dbReference>
<dbReference type="GO" id="GO:2001129">
    <property type="term" value="P:methane biosynthetic process from dimethylamine"/>
    <property type="evidence" value="ECO:0000250"/>
    <property type="project" value="UniProtKB"/>
</dbReference>
<dbReference type="GO" id="GO:0032259">
    <property type="term" value="P:methylation"/>
    <property type="evidence" value="ECO:0007669"/>
    <property type="project" value="UniProtKB-KW"/>
</dbReference>
<dbReference type="InterPro" id="IPR012653">
    <property type="entry name" value="Dimeth_MeTrfase_MtbB"/>
</dbReference>
<dbReference type="NCBIfam" id="TIGR02368">
    <property type="entry name" value="dimeth_PyL"/>
    <property type="match status" value="1"/>
</dbReference>
<dbReference type="Pfam" id="PF09505">
    <property type="entry name" value="Dimeth_Pyl"/>
    <property type="match status" value="1"/>
</dbReference>
<protein>
    <recommendedName>
        <fullName>Dimethylamine methyltransferase MtbB2</fullName>
        <shortName>DMA methyltransferase 2</shortName>
        <shortName>DMAMT 2</shortName>
        <ecNumber evidence="2">2.1.1.249</ecNumber>
    </recommendedName>
    <alternativeName>
        <fullName>Dimethylamine--corrinoid protein methyltransferase 2</fullName>
    </alternativeName>
</protein>
<sequence length="419" mass="44985">KLAEILMMPGKTVSVEQGMEIPVTHDIGTIRLDGDQGNSGVGIPSSRLVGCMTHERAFGADTMELGHIDYSFKPVKPVVSNECQAMEVCQQNMVIPLFYGAMPNMGLYYTPDGPFENPGDLMKAFKIQEAWESMEHAAEHLTRDTVWVMQKLFASGADGVNFDTTGAAGDGDMYGTLHAIEALRKEFPDMYIEAGMAGECVLGMHGNLQYDGVTLAGLWPHQQAPLVAKAGANVFGPVCNTNTSKTSAWNLARAVTFIKAAVGASPIPCHVNMGMGVGGIPMLETPPIDAVTRASKAMVEIAGVDGIOIGVGDPMGMPISHIMASGMTGMRAAGDLVARMEFSKNMRIGEAKEYVAKKLGVDKMDLVDEHVMRELREELDIGIITSVPGAAKGIAAKMNIEKLLGIKINSCNLFRKQIA</sequence>
<proteinExistence type="inferred from homology"/>
<comment type="function">
    <text evidence="1 2 3">Catalyzes the transfer of a methyl group from dimethylamine to the corrinoid cofactor of MtbC (By similarity). No evidence for expression of this protein has been found after growth under presumably inducing conditions (PubMed:16096277).</text>
</comment>
<comment type="catalytic activity">
    <reaction evidence="2">
        <text>Co(I)-[dimethylamine-specific corrinoid protein] + dimethylamine + H(+) = methyl-Co(III)-[dimethylamine-specific corrinoid protein] + methylamine</text>
        <dbReference type="Rhea" id="RHEA:41175"/>
        <dbReference type="Rhea" id="RHEA-COMP:11122"/>
        <dbReference type="Rhea" id="RHEA-COMP:11123"/>
        <dbReference type="ChEBI" id="CHEBI:15378"/>
        <dbReference type="ChEBI" id="CHEBI:58040"/>
        <dbReference type="ChEBI" id="CHEBI:59338"/>
        <dbReference type="ChEBI" id="CHEBI:85033"/>
        <dbReference type="ChEBI" id="CHEBI:85035"/>
        <dbReference type="EC" id="2.1.1.249"/>
    </reaction>
</comment>
<comment type="pathway">
    <text evidence="6">One-carbon metabolism; methanogenesis from dimethylamine.</text>
</comment>
<comment type="similarity">
    <text evidence="5">Belongs to the dimethylamine methyltransferase family.</text>
</comment>
<feature type="chain" id="PRO_0000216559" description="Dimethylamine methyltransferase MtbB2">
    <location>
        <begin position="1" status="less than"/>
        <end position="419"/>
    </location>
</feature>
<feature type="non-standard amino acid" description="Pyrrolysine" evidence="2">
    <location>
        <position position="308"/>
    </location>
</feature>
<feature type="non-terminal residue">
    <location>
        <position position="1"/>
    </location>
</feature>
<name>MTBB2_METBA</name>
<reference key="1">
    <citation type="journal article" date="2000" name="J. Bacteriol.">
        <title>The trimethylamine methyltransferase gene and multiple dimethylamine methyltransferase genes of Methanosarcina barkeri contain in-frame and read-through amber codons.</title>
        <authorList>
            <person name="Paul L."/>
            <person name="Ferguson D.J. Jr."/>
            <person name="Krzycki J.A."/>
        </authorList>
    </citation>
    <scope>NUCLEOTIDE SEQUENCE [GENOMIC DNA]</scope>
    <scope>PATHWAY</scope>
    <source>
        <strain>ATCC 43569 / MS / DSM 800 / JCM 10043 / NBRC 100474</strain>
    </source>
</reference>
<reference key="2">
    <citation type="journal article" date="2005" name="J. Biol. Chem.">
        <title>The residue mass of L-pyrrolysine in three distinct methylamine methyltransferases.</title>
        <authorList>
            <person name="Soares J.A."/>
            <person name="Zhang L."/>
            <person name="Pitsch R.L."/>
            <person name="Kleinholz N.M."/>
            <person name="Jones R.B."/>
            <person name="Wolff J.J."/>
            <person name="Amster J."/>
            <person name="Green-Church K.B."/>
            <person name="Krzycki J.A."/>
        </authorList>
    </citation>
    <scope>NO DETECTED EXPRESSION</scope>
    <source>
        <strain>ATCC 43569 / MS / DSM 800 / JCM 10043 / NBRC 100474</strain>
    </source>
</reference>